<accession>P32390</accession>
<evidence type="ECO:0000250" key="1"/>
<evidence type="ECO:0000269" key="2">
    <source>
    </source>
</evidence>
<evidence type="ECO:0000305" key="3"/>
<evidence type="ECO:0007829" key="4">
    <source>
        <dbReference type="PDB" id="8UXW"/>
    </source>
</evidence>
<organism>
    <name type="scientific">Schizosaccharomyces pombe (strain 972 / ATCC 24843)</name>
    <name type="common">Fission yeast</name>
    <dbReference type="NCBI Taxonomy" id="284812"/>
    <lineage>
        <taxon>Eukaryota</taxon>
        <taxon>Fungi</taxon>
        <taxon>Dikarya</taxon>
        <taxon>Ascomycota</taxon>
        <taxon>Taphrinomycotina</taxon>
        <taxon>Schizosaccharomycetes</taxon>
        <taxon>Schizosaccharomycetales</taxon>
        <taxon>Schizosaccharomycetaceae</taxon>
        <taxon>Schizosaccharomyces</taxon>
    </lineage>
</organism>
<comment type="function">
    <text evidence="1">Functions as ATP-binding component of the Arp2/3 complex which is involved in regulation of actin polymerization and together with an activating nucleation-promoting factor (NPF) mediates the formation of branched actin networks. Seems to contact the pointed end of the daughter actin filament (By similarity). May be involved in cytokinesis.</text>
</comment>
<comment type="subunit">
    <text evidence="2">Component of the Arp2/3 complex composed of arp2, act2, arc1/p41-ARC, arc2/p34-ARC, arc3/p21-ARC, arc4/p20-ARC and arc5/p16-ARC.</text>
</comment>
<comment type="subcellular location">
    <subcellularLocation>
        <location>Cytoplasm</location>
        <location>Cytoskeleton</location>
        <location>Actin patch</location>
    </subcellularLocation>
</comment>
<comment type="similarity">
    <text evidence="3">Belongs to the actin family. ARP3 subfamily.</text>
</comment>
<gene>
    <name type="primary">act2</name>
    <name type="ORF">SPAC630.03</name>
</gene>
<keyword id="KW-0002">3D-structure</keyword>
<keyword id="KW-0009">Actin-binding</keyword>
<keyword id="KW-0067">ATP-binding</keyword>
<keyword id="KW-0963">Cytoplasm</keyword>
<keyword id="KW-0206">Cytoskeleton</keyword>
<keyword id="KW-0547">Nucleotide-binding</keyword>
<keyword id="KW-1185">Reference proteome</keyword>
<proteinExistence type="evidence at protein level"/>
<sequence length="427" mass="47373">MASFNVPIIMDNGTGYSKLGYAGNDAPSYVFPTVIATRSAGASSGPAVSSKPSYMASKGSGHLSSKRATEDLDFFIGNDALKKASAGYSLDYPIRHGQIENWDHMERFWQQSLFKYLRCEPEDHYFLLTEPPLNPPENRENTAEIMFESFNCAGLYIAVQAVLALAASWTSSKVTDRSLTGTVVDSGDGVTHIIPVAEGYVIGSSIKTMPLAGRDVTYFVQSLLRDRNEPDSSLKTAERIKEECCYVCPDIVKEFSRFDREPDRYLKYASESITGHSTTIDVGFERFLAPEIFFNPEIASSDFLTPLPELVDNVVQSSPIDVRKGLYKNIVLSGGSTLFKNFGNRLQRDLKRIVDERIHRSEMLSGAKSGGVDVNVISHKRQRNAVWFGGSLLAQTPEFGSYCHTKADYEEYGASIARRYQIFGNSL</sequence>
<reference key="1">
    <citation type="journal article" date="1992" name="Proc. Natl. Acad. Sci. U.S.A.">
        <title>Identification of act2, an essential gene in the fission yeast Schizosaccharomyces pombe that encodes a protein related to actin.</title>
        <authorList>
            <person name="Lees-Miller J.P."/>
            <person name="Henry G."/>
            <person name="Helfman D.M."/>
        </authorList>
    </citation>
    <scope>NUCLEOTIDE SEQUENCE [GENOMIC DNA]</scope>
</reference>
<reference key="2">
    <citation type="journal article" date="2002" name="Nature">
        <title>The genome sequence of Schizosaccharomyces pombe.</title>
        <authorList>
            <person name="Wood V."/>
            <person name="Gwilliam R."/>
            <person name="Rajandream M.A."/>
            <person name="Lyne M.H."/>
            <person name="Lyne R."/>
            <person name="Stewart A."/>
            <person name="Sgouros J.G."/>
            <person name="Peat N."/>
            <person name="Hayles J."/>
            <person name="Baker S.G."/>
            <person name="Basham D."/>
            <person name="Bowman S."/>
            <person name="Brooks K."/>
            <person name="Brown D."/>
            <person name="Brown S."/>
            <person name="Chillingworth T."/>
            <person name="Churcher C.M."/>
            <person name="Collins M."/>
            <person name="Connor R."/>
            <person name="Cronin A."/>
            <person name="Davis P."/>
            <person name="Feltwell T."/>
            <person name="Fraser A."/>
            <person name="Gentles S."/>
            <person name="Goble A."/>
            <person name="Hamlin N."/>
            <person name="Harris D.E."/>
            <person name="Hidalgo J."/>
            <person name="Hodgson G."/>
            <person name="Holroyd S."/>
            <person name="Hornsby T."/>
            <person name="Howarth S."/>
            <person name="Huckle E.J."/>
            <person name="Hunt S."/>
            <person name="Jagels K."/>
            <person name="James K.D."/>
            <person name="Jones L."/>
            <person name="Jones M."/>
            <person name="Leather S."/>
            <person name="McDonald S."/>
            <person name="McLean J."/>
            <person name="Mooney P."/>
            <person name="Moule S."/>
            <person name="Mungall K.L."/>
            <person name="Murphy L.D."/>
            <person name="Niblett D."/>
            <person name="Odell C."/>
            <person name="Oliver K."/>
            <person name="O'Neil S."/>
            <person name="Pearson D."/>
            <person name="Quail M.A."/>
            <person name="Rabbinowitsch E."/>
            <person name="Rutherford K.M."/>
            <person name="Rutter S."/>
            <person name="Saunders D."/>
            <person name="Seeger K."/>
            <person name="Sharp S."/>
            <person name="Skelton J."/>
            <person name="Simmonds M.N."/>
            <person name="Squares R."/>
            <person name="Squares S."/>
            <person name="Stevens K."/>
            <person name="Taylor K."/>
            <person name="Taylor R.G."/>
            <person name="Tivey A."/>
            <person name="Walsh S.V."/>
            <person name="Warren T."/>
            <person name="Whitehead S."/>
            <person name="Woodward J.R."/>
            <person name="Volckaert G."/>
            <person name="Aert R."/>
            <person name="Robben J."/>
            <person name="Grymonprez B."/>
            <person name="Weltjens I."/>
            <person name="Vanstreels E."/>
            <person name="Rieger M."/>
            <person name="Schaefer M."/>
            <person name="Mueller-Auer S."/>
            <person name="Gabel C."/>
            <person name="Fuchs M."/>
            <person name="Duesterhoeft A."/>
            <person name="Fritzc C."/>
            <person name="Holzer E."/>
            <person name="Moestl D."/>
            <person name="Hilbert H."/>
            <person name="Borzym K."/>
            <person name="Langer I."/>
            <person name="Beck A."/>
            <person name="Lehrach H."/>
            <person name="Reinhardt R."/>
            <person name="Pohl T.M."/>
            <person name="Eger P."/>
            <person name="Zimmermann W."/>
            <person name="Wedler H."/>
            <person name="Wambutt R."/>
            <person name="Purnelle B."/>
            <person name="Goffeau A."/>
            <person name="Cadieu E."/>
            <person name="Dreano S."/>
            <person name="Gloux S."/>
            <person name="Lelaure V."/>
            <person name="Mottier S."/>
            <person name="Galibert F."/>
            <person name="Aves S.J."/>
            <person name="Xiang Z."/>
            <person name="Hunt C."/>
            <person name="Moore K."/>
            <person name="Hurst S.M."/>
            <person name="Lucas M."/>
            <person name="Rochet M."/>
            <person name="Gaillardin C."/>
            <person name="Tallada V.A."/>
            <person name="Garzon A."/>
            <person name="Thode G."/>
            <person name="Daga R.R."/>
            <person name="Cruzado L."/>
            <person name="Jimenez J."/>
            <person name="Sanchez M."/>
            <person name="del Rey F."/>
            <person name="Benito J."/>
            <person name="Dominguez A."/>
            <person name="Revuelta J.L."/>
            <person name="Moreno S."/>
            <person name="Armstrong J."/>
            <person name="Forsburg S.L."/>
            <person name="Cerutti L."/>
            <person name="Lowe T."/>
            <person name="McCombie W.R."/>
            <person name="Paulsen I."/>
            <person name="Potashkin J."/>
            <person name="Shpakovski G.V."/>
            <person name="Ussery D."/>
            <person name="Barrell B.G."/>
            <person name="Nurse P."/>
        </authorList>
    </citation>
    <scope>NUCLEOTIDE SEQUENCE [LARGE SCALE GENOMIC DNA]</scope>
    <source>
        <strain>972 / ATCC 24843</strain>
    </source>
</reference>
<reference key="3">
    <citation type="journal article" date="1999" name="Mol. Biol. Cell">
        <title>A mutant of arp2p causes partial disassembly of the Arp2/3 complex and loss of cortical actin function in fission yeast.</title>
        <authorList>
            <person name="Morrell J.L."/>
            <person name="Morphew M."/>
            <person name="Gould K.L."/>
        </authorList>
    </citation>
    <scope>IDENTIFICATION IN THE ARP2/3 COMPLEX</scope>
</reference>
<dbReference type="EMBL" id="M81068">
    <property type="status" value="NOT_ANNOTATED_CDS"/>
    <property type="molecule type" value="Genomic_DNA"/>
</dbReference>
<dbReference type="EMBL" id="CU329670">
    <property type="protein sequence ID" value="CAB52725.1"/>
    <property type="molecule type" value="Genomic_DNA"/>
</dbReference>
<dbReference type="PIR" id="A41790">
    <property type="entry name" value="A41790"/>
</dbReference>
<dbReference type="RefSeq" id="NP_592898.1">
    <property type="nucleotide sequence ID" value="NM_001018298.2"/>
</dbReference>
<dbReference type="PDB" id="3DWL">
    <property type="method" value="X-ray"/>
    <property type="resolution" value="3.78 A"/>
    <property type="chains" value="A/B=1-427"/>
</dbReference>
<dbReference type="PDB" id="6W17">
    <property type="method" value="EM"/>
    <property type="resolution" value="3.90 A"/>
    <property type="chains" value="A=1-427"/>
</dbReference>
<dbReference type="PDB" id="6W18">
    <property type="method" value="EM"/>
    <property type="resolution" value="4.20 A"/>
    <property type="chains" value="A=1-427"/>
</dbReference>
<dbReference type="PDB" id="8E9B">
    <property type="method" value="EM"/>
    <property type="resolution" value="3.50 A"/>
    <property type="chains" value="A=1-427"/>
</dbReference>
<dbReference type="PDB" id="8UXW">
    <property type="method" value="EM"/>
    <property type="resolution" value="2.70 A"/>
    <property type="chains" value="A=1-427"/>
</dbReference>
<dbReference type="PDB" id="8UXX">
    <property type="method" value="EM"/>
    <property type="resolution" value="3.20 A"/>
    <property type="chains" value="A=1-427"/>
</dbReference>
<dbReference type="PDBsum" id="3DWL"/>
<dbReference type="PDBsum" id="6W17"/>
<dbReference type="PDBsum" id="6W18"/>
<dbReference type="PDBsum" id="8E9B"/>
<dbReference type="PDBsum" id="8UXW"/>
<dbReference type="PDBsum" id="8UXX"/>
<dbReference type="EMDB" id="EMD-21503"/>
<dbReference type="EMDB" id="EMD-42787"/>
<dbReference type="EMDB" id="EMD-42788"/>
<dbReference type="SMR" id="P32390"/>
<dbReference type="BioGRID" id="279661">
    <property type="interactions" value="19"/>
</dbReference>
<dbReference type="ComplexPortal" id="CPX-2474">
    <property type="entry name" value="Actin-related protein 2/3 complex"/>
</dbReference>
<dbReference type="FunCoup" id="P32390">
    <property type="interactions" value="266"/>
</dbReference>
<dbReference type="IntAct" id="P32390">
    <property type="interactions" value="3"/>
</dbReference>
<dbReference type="STRING" id="284812.P32390"/>
<dbReference type="iPTMnet" id="P32390"/>
<dbReference type="PaxDb" id="4896-SPAC630.03.1"/>
<dbReference type="EnsemblFungi" id="SPAC630.03.1">
    <property type="protein sequence ID" value="SPAC630.03.1:pep"/>
    <property type="gene ID" value="SPAC630.03"/>
</dbReference>
<dbReference type="GeneID" id="2543233"/>
<dbReference type="KEGG" id="spo:2543233"/>
<dbReference type="PomBase" id="SPAC630.03"/>
<dbReference type="VEuPathDB" id="FungiDB:SPAC630.03"/>
<dbReference type="eggNOG" id="KOG0678">
    <property type="taxonomic scope" value="Eukaryota"/>
</dbReference>
<dbReference type="HOGENOM" id="CLU_027965_3_0_1"/>
<dbReference type="InParanoid" id="P32390"/>
<dbReference type="OMA" id="GIHYPIR"/>
<dbReference type="PhylomeDB" id="P32390"/>
<dbReference type="Reactome" id="R-SPO-2029482">
    <property type="pathway name" value="Regulation of actin dynamics for phagocytic cup formation"/>
</dbReference>
<dbReference type="Reactome" id="R-SPO-5663213">
    <property type="pathway name" value="RHO GTPases Activate WASPs and WAVEs"/>
</dbReference>
<dbReference type="Reactome" id="R-SPO-8856828">
    <property type="pathway name" value="Clathrin-mediated endocytosis"/>
</dbReference>
<dbReference type="EvolutionaryTrace" id="P32390"/>
<dbReference type="PRO" id="PR:P32390"/>
<dbReference type="Proteomes" id="UP000002485">
    <property type="component" value="Chromosome I"/>
</dbReference>
<dbReference type="GO" id="GO:0030479">
    <property type="term" value="C:actin cortical patch"/>
    <property type="evidence" value="ECO:0000314"/>
    <property type="project" value="PomBase"/>
</dbReference>
<dbReference type="GO" id="GO:0005885">
    <property type="term" value="C:Arp2/3 protein complex"/>
    <property type="evidence" value="ECO:0000314"/>
    <property type="project" value="PomBase"/>
</dbReference>
<dbReference type="GO" id="GO:0051285">
    <property type="term" value="C:cell cortex of cell tip"/>
    <property type="evidence" value="ECO:0000314"/>
    <property type="project" value="PomBase"/>
</dbReference>
<dbReference type="GO" id="GO:0032153">
    <property type="term" value="C:cell division site"/>
    <property type="evidence" value="ECO:0000314"/>
    <property type="project" value="PomBase"/>
</dbReference>
<dbReference type="GO" id="GO:0005737">
    <property type="term" value="C:cytoplasm"/>
    <property type="evidence" value="ECO:0007005"/>
    <property type="project" value="PomBase"/>
</dbReference>
<dbReference type="GO" id="GO:0005829">
    <property type="term" value="C:cytosol"/>
    <property type="evidence" value="ECO:0007005"/>
    <property type="project" value="PomBase"/>
</dbReference>
<dbReference type="GO" id="GO:0051015">
    <property type="term" value="F:actin filament binding"/>
    <property type="evidence" value="ECO:0000314"/>
    <property type="project" value="PomBase"/>
</dbReference>
<dbReference type="GO" id="GO:0005524">
    <property type="term" value="F:ATP binding"/>
    <property type="evidence" value="ECO:0000314"/>
    <property type="project" value="PomBase"/>
</dbReference>
<dbReference type="GO" id="GO:0044396">
    <property type="term" value="P:actin cortical patch organization"/>
    <property type="evidence" value="ECO:0000315"/>
    <property type="project" value="PomBase"/>
</dbReference>
<dbReference type="GO" id="GO:0090135">
    <property type="term" value="P:actin filament branching"/>
    <property type="evidence" value="ECO:0000269"/>
    <property type="project" value="PomBase"/>
</dbReference>
<dbReference type="GO" id="GO:0030041">
    <property type="term" value="P:actin filament polymerization"/>
    <property type="evidence" value="ECO:0000315"/>
    <property type="project" value="PomBase"/>
</dbReference>
<dbReference type="GO" id="GO:0034314">
    <property type="term" value="P:Arp2/3 complex-mediated actin nucleation"/>
    <property type="evidence" value="ECO:0000314"/>
    <property type="project" value="PomBase"/>
</dbReference>
<dbReference type="GO" id="GO:0006897">
    <property type="term" value="P:endocytosis"/>
    <property type="evidence" value="ECO:0000305"/>
    <property type="project" value="PomBase"/>
</dbReference>
<dbReference type="CDD" id="cd10221">
    <property type="entry name" value="ASKHA_NBD_Arp3-like"/>
    <property type="match status" value="1"/>
</dbReference>
<dbReference type="FunFam" id="3.30.420.40:FF:000029">
    <property type="entry name" value="Actin-related protein 3"/>
    <property type="match status" value="1"/>
</dbReference>
<dbReference type="FunFam" id="3.90.640.10:FF:000006">
    <property type="entry name" value="Actin-related protein 3 (ARP3)"/>
    <property type="match status" value="1"/>
</dbReference>
<dbReference type="FunFam" id="3.30.420.40:FF:000058">
    <property type="entry name" value="Putative actin-related protein 5"/>
    <property type="match status" value="1"/>
</dbReference>
<dbReference type="Gene3D" id="3.30.420.40">
    <property type="match status" value="3"/>
</dbReference>
<dbReference type="Gene3D" id="3.90.640.10">
    <property type="entry name" value="Actin, Chain A, domain 4"/>
    <property type="match status" value="1"/>
</dbReference>
<dbReference type="InterPro" id="IPR004000">
    <property type="entry name" value="Actin"/>
</dbReference>
<dbReference type="InterPro" id="IPR020902">
    <property type="entry name" value="Actin/actin-like_CS"/>
</dbReference>
<dbReference type="InterPro" id="IPR043129">
    <property type="entry name" value="ATPase_NBD"/>
</dbReference>
<dbReference type="PANTHER" id="PTHR11937">
    <property type="entry name" value="ACTIN"/>
    <property type="match status" value="1"/>
</dbReference>
<dbReference type="Pfam" id="PF00022">
    <property type="entry name" value="Actin"/>
    <property type="match status" value="1"/>
</dbReference>
<dbReference type="SMART" id="SM00268">
    <property type="entry name" value="ACTIN"/>
    <property type="match status" value="1"/>
</dbReference>
<dbReference type="SUPFAM" id="SSF53067">
    <property type="entry name" value="Actin-like ATPase domain"/>
    <property type="match status" value="2"/>
</dbReference>
<dbReference type="PROSITE" id="PS01132">
    <property type="entry name" value="ACTINS_ACT_LIKE"/>
    <property type="match status" value="1"/>
</dbReference>
<name>ARP3_SCHPO</name>
<protein>
    <recommendedName>
        <fullName>Actin-related protein 3</fullName>
    </recommendedName>
    <alternativeName>
        <fullName>Actin-like protein 3</fullName>
    </alternativeName>
</protein>
<feature type="chain" id="PRO_0000089088" description="Actin-related protein 3">
    <location>
        <begin position="1"/>
        <end position="427"/>
    </location>
</feature>
<feature type="strand" evidence="4">
    <location>
        <begin position="8"/>
        <end position="12"/>
    </location>
</feature>
<feature type="strand" evidence="4">
    <location>
        <begin position="14"/>
        <end position="21"/>
    </location>
</feature>
<feature type="strand" evidence="4">
    <location>
        <begin position="28"/>
        <end position="33"/>
    </location>
</feature>
<feature type="strand" evidence="4">
    <location>
        <begin position="35"/>
        <end position="38"/>
    </location>
</feature>
<feature type="turn" evidence="4">
    <location>
        <begin position="70"/>
        <end position="72"/>
    </location>
</feature>
<feature type="helix" evidence="4">
    <location>
        <begin position="78"/>
        <end position="81"/>
    </location>
</feature>
<feature type="helix" evidence="4">
    <location>
        <begin position="82"/>
        <end position="86"/>
    </location>
</feature>
<feature type="strand" evidence="4">
    <location>
        <begin position="88"/>
        <end position="91"/>
    </location>
</feature>
<feature type="strand" evidence="4">
    <location>
        <begin position="93"/>
        <end position="95"/>
    </location>
</feature>
<feature type="helix" evidence="4">
    <location>
        <begin position="102"/>
        <end position="114"/>
    </location>
</feature>
<feature type="helix" evidence="4">
    <location>
        <begin position="121"/>
        <end position="123"/>
    </location>
</feature>
<feature type="strand" evidence="4">
    <location>
        <begin position="125"/>
        <end position="130"/>
    </location>
</feature>
<feature type="helix" evidence="4">
    <location>
        <begin position="136"/>
        <end position="148"/>
    </location>
</feature>
<feature type="strand" evidence="4">
    <location>
        <begin position="153"/>
        <end position="159"/>
    </location>
</feature>
<feature type="helix" evidence="4">
    <location>
        <begin position="160"/>
        <end position="167"/>
    </location>
</feature>
<feature type="strand" evidence="4">
    <location>
        <begin position="169"/>
        <end position="173"/>
    </location>
</feature>
<feature type="helix" evidence="4">
    <location>
        <begin position="174"/>
        <end position="176"/>
    </location>
</feature>
<feature type="strand" evidence="4">
    <location>
        <begin position="181"/>
        <end position="186"/>
    </location>
</feature>
<feature type="strand" evidence="4">
    <location>
        <begin position="191"/>
        <end position="197"/>
    </location>
</feature>
<feature type="helix" evidence="4">
    <location>
        <begin position="203"/>
        <end position="205"/>
    </location>
</feature>
<feature type="strand" evidence="4">
    <location>
        <begin position="207"/>
        <end position="210"/>
    </location>
</feature>
<feature type="helix" evidence="4">
    <location>
        <begin position="213"/>
        <end position="226"/>
    </location>
</feature>
<feature type="helix" evidence="4">
    <location>
        <begin position="234"/>
        <end position="244"/>
    </location>
</feature>
<feature type="helix" evidence="4">
    <location>
        <begin position="251"/>
        <end position="260"/>
    </location>
</feature>
<feature type="helix" evidence="4">
    <location>
        <begin position="262"/>
        <end position="264"/>
    </location>
</feature>
<feature type="strand" evidence="4">
    <location>
        <begin position="265"/>
        <end position="271"/>
    </location>
</feature>
<feature type="strand" evidence="4">
    <location>
        <begin position="277"/>
        <end position="282"/>
    </location>
</feature>
<feature type="helix" evidence="4">
    <location>
        <begin position="285"/>
        <end position="288"/>
    </location>
</feature>
<feature type="helix" evidence="4">
    <location>
        <begin position="290"/>
        <end position="293"/>
    </location>
</feature>
<feature type="helix" evidence="4">
    <location>
        <begin position="296"/>
        <end position="298"/>
    </location>
</feature>
<feature type="helix" evidence="4">
    <location>
        <begin position="307"/>
        <end position="317"/>
    </location>
</feature>
<feature type="helix" evidence="4">
    <location>
        <begin position="320"/>
        <end position="322"/>
    </location>
</feature>
<feature type="helix" evidence="4">
    <location>
        <begin position="323"/>
        <end position="328"/>
    </location>
</feature>
<feature type="strand" evidence="4">
    <location>
        <begin position="330"/>
        <end position="334"/>
    </location>
</feature>
<feature type="helix" evidence="4">
    <location>
        <begin position="335"/>
        <end position="337"/>
    </location>
</feature>
<feature type="helix" evidence="4">
    <location>
        <begin position="342"/>
        <end position="365"/>
    </location>
</feature>
<feature type="helix" evidence="4">
    <location>
        <begin position="382"/>
        <end position="384"/>
    </location>
</feature>
<feature type="helix" evidence="4">
    <location>
        <begin position="385"/>
        <end position="394"/>
    </location>
</feature>
<feature type="helix" evidence="4">
    <location>
        <begin position="399"/>
        <end position="401"/>
    </location>
</feature>
<feature type="strand" evidence="4">
    <location>
        <begin position="403"/>
        <end position="405"/>
    </location>
</feature>
<feature type="helix" evidence="4">
    <location>
        <begin position="406"/>
        <end position="412"/>
    </location>
</feature>
<feature type="helix" evidence="4">
    <location>
        <begin position="413"/>
        <end position="417"/>
    </location>
</feature>
<feature type="strand" evidence="4">
    <location>
        <begin position="421"/>
        <end position="423"/>
    </location>
</feature>